<protein>
    <recommendedName>
        <fullName evidence="1">Small ribosomal subunit protein uS14B</fullName>
    </recommendedName>
    <alternativeName>
        <fullName evidence="2">30S ribosomal protein S14 type Z</fullName>
    </alternativeName>
</protein>
<dbReference type="EMBL" id="CP000255">
    <property type="protein sequence ID" value="ABD20432.1"/>
    <property type="status" value="ALT_INIT"/>
    <property type="molecule type" value="Genomic_DNA"/>
</dbReference>
<dbReference type="RefSeq" id="WP_001140799.1">
    <property type="nucleotide sequence ID" value="NZ_CP027476.1"/>
</dbReference>
<dbReference type="SMR" id="Q2FEQ2"/>
<dbReference type="KEGG" id="saa:SAUSA300_2191"/>
<dbReference type="HOGENOM" id="CLU_139869_3_0_9"/>
<dbReference type="OMA" id="RAYTRCN"/>
<dbReference type="Proteomes" id="UP000001939">
    <property type="component" value="Chromosome"/>
</dbReference>
<dbReference type="GO" id="GO:0015935">
    <property type="term" value="C:small ribosomal subunit"/>
    <property type="evidence" value="ECO:0007669"/>
    <property type="project" value="TreeGrafter"/>
</dbReference>
<dbReference type="GO" id="GO:0019843">
    <property type="term" value="F:rRNA binding"/>
    <property type="evidence" value="ECO:0007669"/>
    <property type="project" value="UniProtKB-UniRule"/>
</dbReference>
<dbReference type="GO" id="GO:0003735">
    <property type="term" value="F:structural constituent of ribosome"/>
    <property type="evidence" value="ECO:0007669"/>
    <property type="project" value="InterPro"/>
</dbReference>
<dbReference type="GO" id="GO:0008270">
    <property type="term" value="F:zinc ion binding"/>
    <property type="evidence" value="ECO:0007669"/>
    <property type="project" value="UniProtKB-UniRule"/>
</dbReference>
<dbReference type="GO" id="GO:0006412">
    <property type="term" value="P:translation"/>
    <property type="evidence" value="ECO:0007669"/>
    <property type="project" value="UniProtKB-UniRule"/>
</dbReference>
<dbReference type="FunFam" id="4.10.830.10:FF:000001">
    <property type="entry name" value="30S ribosomal protein S14 type Z"/>
    <property type="match status" value="1"/>
</dbReference>
<dbReference type="Gene3D" id="4.10.830.10">
    <property type="entry name" value="30s Ribosomal Protein S14, Chain N"/>
    <property type="match status" value="1"/>
</dbReference>
<dbReference type="HAMAP" id="MF_01364_B">
    <property type="entry name" value="Ribosomal_uS14_2_B"/>
    <property type="match status" value="1"/>
</dbReference>
<dbReference type="InterPro" id="IPR001209">
    <property type="entry name" value="Ribosomal_uS14"/>
</dbReference>
<dbReference type="InterPro" id="IPR023053">
    <property type="entry name" value="Ribosomal_uS14_bact"/>
</dbReference>
<dbReference type="InterPro" id="IPR018271">
    <property type="entry name" value="Ribosomal_uS14_CS"/>
</dbReference>
<dbReference type="InterPro" id="IPR043140">
    <property type="entry name" value="Ribosomal_uS14_sf"/>
</dbReference>
<dbReference type="NCBIfam" id="NF005974">
    <property type="entry name" value="PRK08061.1"/>
    <property type="match status" value="1"/>
</dbReference>
<dbReference type="PANTHER" id="PTHR19836">
    <property type="entry name" value="30S RIBOSOMAL PROTEIN S14"/>
    <property type="match status" value="1"/>
</dbReference>
<dbReference type="PANTHER" id="PTHR19836:SF26">
    <property type="entry name" value="SMALL RIBOSOMAL SUBUNIT PROTEIN US14B"/>
    <property type="match status" value="1"/>
</dbReference>
<dbReference type="Pfam" id="PF00253">
    <property type="entry name" value="Ribosomal_S14"/>
    <property type="match status" value="1"/>
</dbReference>
<dbReference type="SUPFAM" id="SSF57716">
    <property type="entry name" value="Glucocorticoid receptor-like (DNA-binding domain)"/>
    <property type="match status" value="1"/>
</dbReference>
<dbReference type="PROSITE" id="PS00527">
    <property type="entry name" value="RIBOSOMAL_S14"/>
    <property type="match status" value="1"/>
</dbReference>
<sequence length="61" mass="7300">MAKTSMVAKQQKKQKYAVREYTRCERCGRPHSVYRKFKLCRICFRELAYKGQIPGVRKASW</sequence>
<keyword id="KW-0479">Metal-binding</keyword>
<keyword id="KW-0687">Ribonucleoprotein</keyword>
<keyword id="KW-0689">Ribosomal protein</keyword>
<keyword id="KW-0694">RNA-binding</keyword>
<keyword id="KW-0699">rRNA-binding</keyword>
<keyword id="KW-0862">Zinc</keyword>
<evidence type="ECO:0000255" key="1">
    <source>
        <dbReference type="HAMAP-Rule" id="MF_01364"/>
    </source>
</evidence>
<evidence type="ECO:0000305" key="2"/>
<name>RS14Z_STAA3</name>
<accession>Q2FEQ2</accession>
<organism>
    <name type="scientific">Staphylococcus aureus (strain USA300)</name>
    <dbReference type="NCBI Taxonomy" id="367830"/>
    <lineage>
        <taxon>Bacteria</taxon>
        <taxon>Bacillati</taxon>
        <taxon>Bacillota</taxon>
        <taxon>Bacilli</taxon>
        <taxon>Bacillales</taxon>
        <taxon>Staphylococcaceae</taxon>
        <taxon>Staphylococcus</taxon>
    </lineage>
</organism>
<proteinExistence type="inferred from homology"/>
<feature type="chain" id="PRO_0000269136" description="Small ribosomal subunit protein uS14B">
    <location>
        <begin position="1"/>
        <end position="61"/>
    </location>
</feature>
<feature type="binding site" evidence="1">
    <location>
        <position position="24"/>
    </location>
    <ligand>
        <name>Zn(2+)</name>
        <dbReference type="ChEBI" id="CHEBI:29105"/>
    </ligand>
</feature>
<feature type="binding site" evidence="1">
    <location>
        <position position="27"/>
    </location>
    <ligand>
        <name>Zn(2+)</name>
        <dbReference type="ChEBI" id="CHEBI:29105"/>
    </ligand>
</feature>
<feature type="binding site" evidence="1">
    <location>
        <position position="40"/>
    </location>
    <ligand>
        <name>Zn(2+)</name>
        <dbReference type="ChEBI" id="CHEBI:29105"/>
    </ligand>
</feature>
<feature type="binding site" evidence="1">
    <location>
        <position position="43"/>
    </location>
    <ligand>
        <name>Zn(2+)</name>
        <dbReference type="ChEBI" id="CHEBI:29105"/>
    </ligand>
</feature>
<gene>
    <name evidence="1" type="primary">rpsZ</name>
    <name evidence="1" type="synonym">rpsN1</name>
    <name type="ordered locus">SAUSA300_2191</name>
</gene>
<reference key="1">
    <citation type="journal article" date="2006" name="Lancet">
        <title>Complete genome sequence of USA300, an epidemic clone of community-acquired meticillin-resistant Staphylococcus aureus.</title>
        <authorList>
            <person name="Diep B.A."/>
            <person name="Gill S.R."/>
            <person name="Chang R.F."/>
            <person name="Phan T.H."/>
            <person name="Chen J.H."/>
            <person name="Davidson M.G."/>
            <person name="Lin F."/>
            <person name="Lin J."/>
            <person name="Carleton H.A."/>
            <person name="Mongodin E.F."/>
            <person name="Sensabaugh G.F."/>
            <person name="Perdreau-Remington F."/>
        </authorList>
    </citation>
    <scope>NUCLEOTIDE SEQUENCE [LARGE SCALE GENOMIC DNA]</scope>
    <source>
        <strain>USA300</strain>
    </source>
</reference>
<comment type="function">
    <text evidence="1">Binds 16S rRNA, required for the assembly of 30S particles and may also be responsible for determining the conformation of the 16S rRNA at the A site.</text>
</comment>
<comment type="cofactor">
    <cofactor evidence="1">
        <name>Zn(2+)</name>
        <dbReference type="ChEBI" id="CHEBI:29105"/>
    </cofactor>
    <text evidence="1">Binds 1 zinc ion per subunit.</text>
</comment>
<comment type="subunit">
    <text evidence="1">Part of the 30S ribosomal subunit. Contacts proteins S3 and S10.</text>
</comment>
<comment type="similarity">
    <text evidence="1">Belongs to the universal ribosomal protein uS14 family. Zinc-binding uS14 subfamily.</text>
</comment>
<comment type="sequence caution" evidence="2">
    <conflict type="erroneous initiation">
        <sequence resource="EMBL-CDS" id="ABD20432"/>
    </conflict>
    <text>Truncated N-terminus.</text>
</comment>